<accession>Q9JMB7</accession>
<accession>A1L324</accession>
<accession>A1L325</accession>
<accession>Q6NXX0</accession>
<organism>
    <name type="scientific">Mus musculus</name>
    <name type="common">Mouse</name>
    <dbReference type="NCBI Taxonomy" id="10090"/>
    <lineage>
        <taxon>Eukaryota</taxon>
        <taxon>Metazoa</taxon>
        <taxon>Chordata</taxon>
        <taxon>Craniata</taxon>
        <taxon>Vertebrata</taxon>
        <taxon>Euteleostomi</taxon>
        <taxon>Mammalia</taxon>
        <taxon>Eutheria</taxon>
        <taxon>Euarchontoglires</taxon>
        <taxon>Glires</taxon>
        <taxon>Rodentia</taxon>
        <taxon>Myomorpha</taxon>
        <taxon>Muroidea</taxon>
        <taxon>Muridae</taxon>
        <taxon>Murinae</taxon>
        <taxon>Mus</taxon>
        <taxon>Mus</taxon>
    </lineage>
</organism>
<gene>
    <name evidence="33" type="primary">Piwil1</name>
    <name evidence="26 28" type="synonym">Miwi</name>
</gene>
<comment type="function">
    <text evidence="5 7 9 17 18 23 25">Endoribonuclease that plays a central role in postnatal germ cells by repressing transposable elements and preventing their mobilization, which is essential for the germline integrity (PubMed:11578866, PubMed:21237665, PubMed:22121019). Acts via the piRNA metabolic process, which mediates the repression of transposable elements during meiosis by forming complexes composed of piRNAs and Piwi proteins and governs the methylation and subsequent repression of transposons (PubMed:11578866, PubMed:21237665, PubMed:22121019). Directly binds methylated piRNAs, a class of 24 to 30 nucleotide RNAs that are generated by a Dicer-independent mechanism and are primarily derived from transposons and other repeated sequence elements (PubMed:11578866, PubMed:21237665, PubMed:22121019). Strongly prefers a uridine in the first position of their guide (g1U preference, also named 1U-bias) (PubMed:24757166). Not involved in the piRNA amplification loop, also named ping-pong amplification cycle (PubMed:22121019). Acts as an endoribonuclease that cleaves transposon messenger RNAs (PubMed:22121019). Besides their function in transposable elements repression, piRNAs are probably involved in other processes during meiosis such as translation regulation (PubMed:16938833). Probable component of some RISC complex, which mediates RNA cleavage and translational silencing (PubMed:16938833). Also plays a role in the formation of chromatoid bodies and is required for some miRNAs stability (PubMed:16787948). Required to sequester RNF8 in the cytoplasm until late spermatogenesis; RNF8 being released upon ubiquitination and degradation of PIWIL1 (PubMed:28552346).</text>
</comment>
<comment type="cofactor">
    <cofactor evidence="18">
        <name>Mg(2+)</name>
        <dbReference type="ChEBI" id="CHEBI:18420"/>
    </cofactor>
</comment>
<comment type="subunit">
    <text evidence="7 8 9 10 13 14 15 16 19 20 22 24 25">Interacts (via Piwi domain) with DICER1, suggesting that it forms ribonucleoprotein RISC complexes; this interaction is regulated by HSP90AB1 activity (PubMed:16938833). Interacts with MAEL, KIF17, PABPC1, PRMT5 and WDR77 (PubMed:16787948, PubMed:16787967, PubMed:19020299, PubMed:19584108). Interacts (when methylated on arginine residues) with TDRD1, TDRKH/TDRD2, RNF17/TDRD4, TDRD6, TDRD7 and TDRD9 (PubMed:19584108, PubMed:19918066, PubMed:19926723, PubMed:23714778). Interacts with CLOCK (PubMed:22900038). Interacts with MOV10L1 (PubMed:20534472). Interacts with ANAPC10; interaction oly takes place following piRNA-binding (PubMed:23328397). Interacts with RNF8; leading to sequester RNF8 in the cytoplasm (PubMed:28552346). Interacts with Tex19.1 and, probably, Tex19.2 (PubMed:28254886).</text>
</comment>
<comment type="subcellular location">
    <subcellularLocation>
        <location evidence="5 6 7 9 10 13">Cytoplasm</location>
    </subcellularLocation>
    <text>Component of the meiotic nuage, also named P granule, a germ-cell-specific organelle required to repress transposon activity during meiosis. Also present in chromatoid body.</text>
</comment>
<comment type="alternative products">
    <event type="alternative splicing"/>
    <isoform>
        <id>Q9JMB7-1</id>
        <name>1</name>
        <sequence type="displayed"/>
    </isoform>
    <isoform>
        <id>Q9JMB7-2</id>
        <name>2</name>
        <sequence type="described" ref="VSP_036663"/>
    </isoform>
</comment>
<comment type="tissue specificity">
    <text evidence="5 6 11 15">Expressed in brain. Expressed in testis, specifically in spermatocytes (at protein level). Only detected in germ lineage cells of adult testis. Expressed in male gonads 2 weeks after birth at the initiation of spermatogenesis, but not expressed in female gonads.</text>
</comment>
<comment type="induction">
    <text evidence="21">Expression is activated by MYBL1/A-MYB.</text>
</comment>
<comment type="domain">
    <text evidence="20">The D-box (destruction box) acts as a recognition signal for association with the APC/C complex, ubiquitination and degradation (PubMed:23328397).</text>
</comment>
<comment type="domain">
    <text evidence="17 23">The PAZ domain specifically recognizes binds the 2'-O-methylated 3'-end of piRNAs (PubMed:21237665). The MID region is required for recognition of uridine in the first position of piRNAs (g1U preference, also named 1U-bias) (PubMed:24757166).</text>
</comment>
<comment type="PTM">
    <text evidence="20 25">Ubiquitinated by the anaphase promoting complex/cyclosome (APC/C) in late spermatids, leading to its degradation (PubMed:23328397). Ubiquitination only takes place following piRNA-binding in adult testis (PubMed:23328397). Ubiquitination and degradation in late spermatogenesis by APC/C is probably required to release RNF8 from the cytoplasm and promote histone to protamine exchange by RNF8 (PubMed:28552346).</text>
</comment>
<comment type="PTM">
    <text evidence="11 12 13 14 15">Arginine methylation by PRMT5 is required for the interaction with Tudor domain-containing protein (TDRD1, TDRKH/TDRD2, RNF17/TDRD4, TDRD6, TDRD7 and TDRD9) and subsequent localization to the meiotic nuage, also named P granule.</text>
</comment>
<comment type="disruption phenotype">
    <text evidence="6 7">Mice display spermatogenic arrest at the beginning of the round spermatid stage, resembling the phenotype of CREM, a master regulator of spermiogenesis; mRNAs of FHL5/activator of CREM and CREM target genes are down-regulated in testes. Female are fertile but male are completely sterile, no sperm is found in the epididimus. Chromatoid bodies from round spermatids are not fully compacted and remain as a diffuse chromatoid material.</text>
</comment>
<comment type="similarity">
    <text evidence="29">Belongs to the argonaute family. Piwi subfamily.</text>
</comment>
<comment type="sequence caution" evidence="29">
    <conflict type="miscellaneous discrepancy">
        <sequence resource="EMBL-CDS" id="AAH66846"/>
    </conflict>
    <text>Contaminating sequence. Potential poly-A sequence.</text>
</comment>
<protein>
    <recommendedName>
        <fullName evidence="29">Piwi-like protein 1</fullName>
        <ecNumber evidence="18">3.1.26.-</ecNumber>
    </recommendedName>
</protein>
<sequence length="862" mass="98574">MTGRARARARGRARGQETVQHVGAAASQQPGYIPPRPQQSPTEGDLVGRGRQRGMVVGATSKSQELQISAGFQELSLAERGGRRRDFHDLGVNTRQNLDHVKESKTGSSGIIVKLSTNHFRLTSRPQWALYQYHIDYNPLMEARRLRSALLFQHEDLIGRCHAFDGTILFLPKRLQHKVTEVFSQTRNGEHVRITITLTNELPPTSPTCLQFYNIIFRRLLKIMNLQQIGRNYYNPSDPIDIPNHRLVIWPGFTTSILQYENNIMLCTDVSHKVLRSETVLDFMFNLYQQTEEHKFQEQVSKELIGLIVLTKYNNKTYRVDDIDWDQNPKSTFKKADGSEVSFLEYYRKQYNQEITDLKQPVLVSQPKRRRGPGGTLPGPAMLIPELCYLTGLTDKMRNDFNVMKDLAVHTRLTPEQRQREVGRLIDYIHKDDNVQRELRDWGLSFDSNLLSFSGRILQSEKIHQGGKTFDYNPQFADWSKETRGAPLISVKPLDNWLLIYTRRNYEAANSLIQNLFKVTPAMGIQMKKAIMIEVDDRTEAYLRALQQKVTSDTQIVVCLLSSNRKDKYDAIKKYLCTDCPTPSQCVVARTLGKQQTVMAIATKIALQMNCKMGGELWRVDMPLKLAMIVGIDCYHDTTAGRRSIAGFVASINEGMTRWFSRCVFQDRGQELVDGLKVCLQAALRAWSGCNEYMPSRVIVYRDGVGDGQLKTLVNYEVPQFLDCLKSVGRGYNPRLTVIVVKKRVNARFFAQSGGRLQNPLPGTVIDVEVTRPEWYDFFIVSQAVRSGSVSPTHYNVIYDSSGLKPDHIQRLTYKLCHVYYNWPGVIRVPAPCQYAHKLAFLVGQSIHREPNLSLSNRLYYL</sequence>
<reference key="1">
    <citation type="journal article" date="2001" name="Mech. Dev.">
        <title>Two mouse piwi-related genes: miwi and mili.</title>
        <authorList>
            <person name="Kuramochi-Miyagawa S.K."/>
            <person name="Kimura T."/>
            <person name="Yomogida K."/>
            <person name="Kuroiwa A."/>
            <person name="Tadokoro Y."/>
            <person name="Fujita Y."/>
            <person name="Sato M."/>
            <person name="Matsuda Y."/>
            <person name="Nakano T."/>
        </authorList>
    </citation>
    <scope>NUCLEOTIDE SEQUENCE [MRNA] (ISOFORM 1)</scope>
    <scope>SUBCELLULAR LOCATION</scope>
    <scope>TISSUE SPECIFICITY</scope>
    <scope>FUNCTION</scope>
    <scope>RNA-BINDING</scope>
    <source>
        <tissue>Testis</tissue>
    </source>
</reference>
<reference key="2">
    <citation type="journal article" date="2002" name="Dev. Cell">
        <title>miwi, a murine homolog of piwi, encodes a cytoplasmic protein essential for spermatogenesis.</title>
        <authorList>
            <person name="Deng W."/>
            <person name="Lin H."/>
        </authorList>
    </citation>
    <scope>NUCLEOTIDE SEQUENCE [MRNA] (ISOFORM 1)</scope>
    <scope>SUBCELLULAR LOCATION</scope>
    <scope>DISRUPTION PHENOTYPE</scope>
    <scope>TISSUE SPECIFICITY</scope>
</reference>
<reference key="3">
    <citation type="submission" date="2006-12" db="EMBL/GenBank/DDBJ databases">
        <title>The clone of Miwi and research about its effect on self-proliferation of SSCs.</title>
        <authorList>
            <person name="Zhang S."/>
            <person name="Li D."/>
            <person name="Li E."/>
            <person name="Lu J."/>
        </authorList>
    </citation>
    <scope>NUCLEOTIDE SEQUENCE [MRNA] (ISOFORM 1)</scope>
    <source>
        <strain>KM</strain>
        <tissue>Testis</tissue>
    </source>
</reference>
<reference key="4">
    <citation type="journal article" date="2004" name="Genome Res.">
        <title>The status, quality, and expansion of the NIH full-length cDNA project: the Mammalian Gene Collection (MGC).</title>
        <authorList>
            <consortium name="The MGC Project Team"/>
        </authorList>
    </citation>
    <scope>NUCLEOTIDE SEQUENCE [LARGE SCALE MRNA] (ISOFORMS 1 AND 2)</scope>
    <source>
        <strain>C57BL/6J</strain>
        <tissue>Egg</tissue>
    </source>
</reference>
<reference key="5">
    <citation type="journal article" date="2006" name="Genes Dev.">
        <title>A novel class of small RNAs in mouse spermatogenic cells.</title>
        <authorList>
            <person name="Grivna S.T."/>
            <person name="Beyret E."/>
            <person name="Wang Z."/>
            <person name="Lin H."/>
        </authorList>
    </citation>
    <scope>RNA-BINDING</scope>
</reference>
<reference key="6">
    <citation type="journal article" date="2006" name="J. Cell Sci.">
        <title>Interplay of PIWI/Argonaute protein MIWI and kinesin KIF17b in chromatoid bodies of male germ cells.</title>
        <authorList>
            <person name="Kotaja N."/>
            <person name="Lin H."/>
            <person name="Parvinen M."/>
            <person name="Sassone-Corsi P."/>
        </authorList>
    </citation>
    <scope>FUNCTION</scope>
    <scope>SUBCELLULAR LOCATION</scope>
    <scope>INTERACTION WITH KIF17</scope>
    <scope>DISRUPTION PHENOTYPE</scope>
</reference>
<reference key="7">
    <citation type="journal article" date="2006" name="Nature">
        <title>A germline-specific class of small RNAs binds mammalian Piwi proteins.</title>
        <authorList>
            <person name="Girard A."/>
            <person name="Sachidanandam R."/>
            <person name="Hannon G.J."/>
            <person name="Carmell M.A."/>
        </authorList>
    </citation>
    <scope>RNA-BINDING</scope>
</reference>
<reference key="8">
    <citation type="journal article" date="2006" name="Hum. Mol. Genet.">
        <title>Mouse MAELSTROM: the link between meiotic silencing of unsynapsed chromatin and microRNA pathway?</title>
        <authorList>
            <person name="Costa Y."/>
            <person name="Speed R.M."/>
            <person name="Gautier P."/>
            <person name="Semple C.A."/>
            <person name="Maratou K."/>
            <person name="Turner J.M.A."/>
            <person name="Cooke H.J."/>
        </authorList>
    </citation>
    <scope>INTERACTION WITH MAEL</scope>
</reference>
<reference key="9">
    <citation type="journal article" date="2006" name="Proc. Natl. Acad. Sci. U.S.A.">
        <title>MIWI associates with translational machinery and PIWI-interacting RNAs (piRNAs) in regulating spermatogenesis.</title>
        <authorList>
            <person name="Grivna S.T."/>
            <person name="Pyhtila B."/>
            <person name="Lin H."/>
        </authorList>
    </citation>
    <scope>FUNCTION</scope>
    <scope>SUBCELLULAR LOCATION</scope>
    <scope>RNA-BINDING</scope>
    <scope>INTERACTION WITH DICER1</scope>
</reference>
<reference key="10">
    <citation type="journal article" date="2009" name="Biol. Reprod.">
        <title>Characterization of two cytoplasmic poly(A)-binding proteins, PABPC1 and PABPC2, in mouse spermatogenic cells.</title>
        <authorList>
            <person name="Kimura M."/>
            <person name="Ishida K."/>
            <person name="Kashiwabara S."/>
            <person name="Baba T."/>
        </authorList>
    </citation>
    <scope>SUBCELLULAR LOCATION</scope>
    <scope>INTERACTION WITH PABPC1</scope>
</reference>
<reference key="11">
    <citation type="journal article" date="2009" name="Genes Dev.">
        <title>Proteomic analysis of murine Piwi proteins reveals a role for arginine methylation in specifying interaction with Tudor family members.</title>
        <authorList>
            <person name="Vagin V.V."/>
            <person name="Wohlschlegel J."/>
            <person name="Qu J."/>
            <person name="Jonsson Z."/>
            <person name="Huang X."/>
            <person name="Chuma S."/>
            <person name="Girard A."/>
            <person name="Sachidanandam R."/>
            <person name="Hannon G.J."/>
            <person name="Aravin A.A."/>
        </authorList>
    </citation>
    <scope>METHYLATION AT ARG-14; ARG-49 AND ARG-371</scope>
    <scope>SUBCELLULAR LOCATION</scope>
    <scope>INTERACTION WITH TDRD1; TDRKH; TDRD6; PRMT5 AND WDR77</scope>
</reference>
<reference key="12">
    <citation type="journal article" date="2009" name="Nat. Cell Biol.">
        <title>Arginine methylation of Piwi proteins catalysed by dPRMT5 is required for Ago3 and Aub stability.</title>
        <authorList>
            <person name="Kirino Y."/>
            <person name="Kim N."/>
            <person name="de Planell-Saguer M."/>
            <person name="Khandros E."/>
            <person name="Chiorean S."/>
            <person name="Klein P.S."/>
            <person name="Rigoutsos I."/>
            <person name="Jongens T.A."/>
            <person name="Mourelatos Z."/>
        </authorList>
    </citation>
    <scope>IDENTIFICATION BY MASS SPECTROMETRY</scope>
    <scope>TISSUE SPECIFICITY</scope>
    <scope>METHYLATION</scope>
</reference>
<reference key="13">
    <citation type="journal article" date="2009" name="Nat. Struct. Mol. Biol.">
        <title>Loss of the Mili-interacting Tudor domain-containing protein-1 activates transposons and alters the Mili-associated small RNA profile.</title>
        <authorList>
            <person name="Reuter M."/>
            <person name="Chuma S."/>
            <person name="Tanaka T."/>
            <person name="Franz T."/>
            <person name="Stark A."/>
            <person name="Pillai R.S."/>
        </authorList>
    </citation>
    <scope>METHYLATION</scope>
</reference>
<reference key="14">
    <citation type="journal article" date="2009" name="Proc. Natl. Acad. Sci. U.S.A.">
        <title>Mouse Piwi interactome identifies binding mechanism of Tdrkh Tudor domain to arginine methylated Miwi.</title>
        <authorList>
            <person name="Chen C."/>
            <person name="Jin J."/>
            <person name="James D.A."/>
            <person name="Adams-Cioaba M.A."/>
            <person name="Park J.G."/>
            <person name="Guo Y."/>
            <person name="Tenaglia E."/>
            <person name="Xu C."/>
            <person name="Gish G."/>
            <person name="Min J."/>
            <person name="Pawson T."/>
        </authorList>
    </citation>
    <scope>METHYLATION AT ARG-53</scope>
    <scope>INTERACTION WITH TDRKH</scope>
</reference>
<reference key="15">
    <citation type="journal article" date="2010" name="Cell">
        <title>A tissue-specific atlas of mouse protein phosphorylation and expression.</title>
        <authorList>
            <person name="Huttlin E.L."/>
            <person name="Jedrychowski M.P."/>
            <person name="Elias J.E."/>
            <person name="Goswami T."/>
            <person name="Rad R."/>
            <person name="Beausoleil S.A."/>
            <person name="Villen J."/>
            <person name="Haas W."/>
            <person name="Sowa M.E."/>
            <person name="Gygi S.P."/>
        </authorList>
    </citation>
    <scope>IDENTIFICATION BY MASS SPECTROMETRY [LARGE SCALE ANALYSIS]</scope>
    <source>
        <tissue>Testis</tissue>
    </source>
</reference>
<reference key="16">
    <citation type="journal article" date="2010" name="Proc. Natl. Acad. Sci. U.S.A.">
        <title>Mouse MOV10L1 associates with Piwi proteins and is an essential component of the Piwi-interacting RNA (piRNA) pathway.</title>
        <authorList>
            <person name="Zheng K."/>
            <person name="Xiol J."/>
            <person name="Reuter M."/>
            <person name="Eckardt S."/>
            <person name="Leu N.A."/>
            <person name="McLaughlin K.J."/>
            <person name="Stark A."/>
            <person name="Sachidanandam R."/>
            <person name="Pillai R.S."/>
            <person name="Wang P.J."/>
        </authorList>
    </citation>
    <scope>INTERACTION WITH MOV10L1</scope>
</reference>
<reference key="17">
    <citation type="journal article" date="2010" name="RNA">
        <title>Arginine methylation of Aubergine mediates Tudor binding and germ plasm localization.</title>
        <authorList>
            <person name="Kirino Y."/>
            <person name="Vourekas A."/>
            <person name="Sayed N."/>
            <person name="de Lima Alves F."/>
            <person name="Thomson T."/>
            <person name="Lasko P."/>
            <person name="Rappsilber J."/>
            <person name="Jongens T.A."/>
            <person name="Mourelatos Z."/>
        </authorList>
    </citation>
    <scope>INTERACTION WITH TDRD6</scope>
    <scope>TISSUE SPECIFICITY</scope>
    <scope>METHYLATION</scope>
</reference>
<reference key="18">
    <citation type="journal article" date="2012" name="PLoS ONE">
        <title>Circadian proteins CLOCK and BMAL1 in the chromatoid body, a RNA processing granule of male germ cells.</title>
        <authorList>
            <person name="Peruquetti R.L."/>
            <person name="de Mateo S."/>
            <person name="Sassone-Corsi P."/>
        </authorList>
    </citation>
    <scope>INTERACTION WITH CLOCK</scope>
</reference>
<reference key="19">
    <citation type="journal article" date="2013" name="EMBO J.">
        <title>Tdrkh is essential for spermatogenesis and participates in primary piRNA biogenesis in the germline.</title>
        <authorList>
            <person name="Saxe J.P."/>
            <person name="Chen M."/>
            <person name="Zhao H."/>
            <person name="Lin H."/>
        </authorList>
    </citation>
    <scope>INTERACTION WITH TDRKH</scope>
</reference>
<reference key="20">
    <citation type="journal article" date="2011" name="Nature">
        <title>Miwi catalysis is required for piRNA amplification-independent LINE1 transposon silencing.</title>
        <authorList>
            <person name="Reuter M."/>
            <person name="Berninger P."/>
            <person name="Chuma S."/>
            <person name="Shah H."/>
            <person name="Hosokawa M."/>
            <person name="Funaya C."/>
            <person name="Antony C."/>
            <person name="Sachidanandam R."/>
            <person name="Pillai R.S."/>
        </authorList>
    </citation>
    <scope>FUNCTION</scope>
    <scope>COFACTOR</scope>
    <scope>MUTAGENESIS OF ASP-633</scope>
</reference>
<reference key="21">
    <citation type="journal article" date="2013" name="Dev. Cell">
        <title>piRNA-triggered MIWI ubiquitination and removal by APC/C in late spermatogenesis.</title>
        <authorList>
            <person name="Zhao S."/>
            <person name="Gou L.T."/>
            <person name="Zhang M."/>
            <person name="Zu L.D."/>
            <person name="Hua M.M."/>
            <person name="Hua Y."/>
            <person name="Shi H.J."/>
            <person name="Li Y."/>
            <person name="Li J."/>
            <person name="Li D."/>
            <person name="Wang E.D."/>
            <person name="Liu M.F."/>
        </authorList>
    </citation>
    <scope>UBIQUITINATION</scope>
    <scope>INTERACTION WITH ANAPC10</scope>
    <scope>DOMAIN</scope>
    <scope>MUTAGENESIS OF 218-ARG--LEU-221; 330-LYS--LYS-335 AND 346-TYR-TYR-347</scope>
</reference>
<reference key="22">
    <citation type="journal article" date="2013" name="Mol. Cell">
        <title>An ancient transcription factor initiates the burst of piRNA production during early meiosis in mouse testes.</title>
        <authorList>
            <person name="Li X.Z."/>
            <person name="Roy C.K."/>
            <person name="Dong X."/>
            <person name="Bolcun-Filas E."/>
            <person name="Wang J."/>
            <person name="Han B.W."/>
            <person name="Xu J."/>
            <person name="Moore M.J."/>
            <person name="Schimenti J.C."/>
            <person name="Weng Z."/>
            <person name="Zamore P.D."/>
        </authorList>
    </citation>
    <scope>INDUCTION</scope>
</reference>
<reference key="23">
    <citation type="journal article" date="2017" name="Cell">
        <title>Ubiquitination-deficient mutations in human Piwi cause male infertility by impairing histone-to-protamine exchange during spermiogenesis.</title>
        <authorList>
            <person name="Gou L.T."/>
            <person name="Kang J.Y."/>
            <person name="Dai P."/>
            <person name="Wang X."/>
            <person name="Li F."/>
            <person name="Zhao S."/>
            <person name="Zhang M."/>
            <person name="Hua M.M."/>
            <person name="Lu Y."/>
            <person name="Zhu Y."/>
            <person name="Li Z."/>
            <person name="Chen H."/>
            <person name="Wu L.G."/>
            <person name="Li D."/>
            <person name="Fu X.D."/>
            <person name="Li J."/>
            <person name="Shi H.J."/>
            <person name="Liu M.F."/>
        </authorList>
    </citation>
    <scope>FUNCTION</scope>
    <scope>UBIQUITINATION</scope>
    <scope>INTERACTION WITH RNF8</scope>
    <scope>MUTAGENESIS OF 218-ARG--LEU-221</scope>
</reference>
<reference key="24">
    <citation type="journal article" date="2017" name="J. Cell Sci.">
        <title>Tex19 paralogs are new members of the piRNA pathway controlling retrotransposon suppression.</title>
        <authorList>
            <person name="Tarabay Y."/>
            <person name="Achour M."/>
            <person name="Teletin M."/>
            <person name="Ye T."/>
            <person name="Teissandier A."/>
            <person name="Mark M."/>
            <person name="Bourc'his D."/>
            <person name="Viville S."/>
        </authorList>
    </citation>
    <scope>RNA-BINDING</scope>
    <scope>INTERACTION WITH TEX19.1</scope>
</reference>
<reference key="25">
    <citation type="journal article" date="2011" name="Structure">
        <title>Recognition of 2'-O-methylated 3'-end of piRNA by the PAZ domain of a Piwi protein.</title>
        <authorList>
            <person name="Simon B."/>
            <person name="Kirkpatrick J.P."/>
            <person name="Eckhardt S."/>
            <person name="Reuter M."/>
            <person name="Rocha E.A."/>
            <person name="Andrade-Navarro M.A."/>
            <person name="Sehr P."/>
            <person name="Pillai R.S."/>
            <person name="Carlomagno T."/>
        </authorList>
    </citation>
    <scope>STRUCTURE BY NMR OF 276-395 IN COMPLEX WITH METHYLATED SMALL RNA</scope>
    <scope>DOMAIN PAZ</scope>
    <scope>MUTAGENESIS OF PHE-343 AND MET-382</scope>
    <scope>FUNCTION</scope>
</reference>
<reference key="26">
    <citation type="journal article" date="2014" name="RNA">
        <title>The MID-PIWI module of Piwi proteins specifies nucleotide- and strand-biases of piRNAs.</title>
        <authorList>
            <person name="Cora E."/>
            <person name="Pandey R.R."/>
            <person name="Xiol J."/>
            <person name="Taylor J."/>
            <person name="Sachidanandam R."/>
            <person name="McCarthy A.A."/>
            <person name="Pillai R.S."/>
        </authorList>
    </citation>
    <scope>X-RAY CRYSTALLOGRAPHY (2.30 ANGSTROMS) OF 485-612</scope>
    <scope>FUNCTION</scope>
    <scope>DOMAIN</scope>
</reference>
<evidence type="ECO:0000250" key="1">
    <source>
        <dbReference type="UniProtKB" id="A8D8P8"/>
    </source>
</evidence>
<evidence type="ECO:0000255" key="2">
    <source>
        <dbReference type="PROSITE-ProRule" id="PRU00142"/>
    </source>
</evidence>
<evidence type="ECO:0000255" key="3">
    <source>
        <dbReference type="PROSITE-ProRule" id="PRU00150"/>
    </source>
</evidence>
<evidence type="ECO:0000256" key="4">
    <source>
        <dbReference type="SAM" id="MobiDB-lite"/>
    </source>
</evidence>
<evidence type="ECO:0000269" key="5">
    <source>
    </source>
</evidence>
<evidence type="ECO:0000269" key="6">
    <source>
    </source>
</evidence>
<evidence type="ECO:0000269" key="7">
    <source>
    </source>
</evidence>
<evidence type="ECO:0000269" key="8">
    <source>
    </source>
</evidence>
<evidence type="ECO:0000269" key="9">
    <source>
    </source>
</evidence>
<evidence type="ECO:0000269" key="10">
    <source>
    </source>
</evidence>
<evidence type="ECO:0000269" key="11">
    <source>
    </source>
</evidence>
<evidence type="ECO:0000269" key="12">
    <source>
    </source>
</evidence>
<evidence type="ECO:0000269" key="13">
    <source>
    </source>
</evidence>
<evidence type="ECO:0000269" key="14">
    <source>
    </source>
</evidence>
<evidence type="ECO:0000269" key="15">
    <source>
    </source>
</evidence>
<evidence type="ECO:0000269" key="16">
    <source>
    </source>
</evidence>
<evidence type="ECO:0000269" key="17">
    <source>
    </source>
</evidence>
<evidence type="ECO:0000269" key="18">
    <source>
    </source>
</evidence>
<evidence type="ECO:0000269" key="19">
    <source>
    </source>
</evidence>
<evidence type="ECO:0000269" key="20">
    <source>
    </source>
</evidence>
<evidence type="ECO:0000269" key="21">
    <source>
    </source>
</evidence>
<evidence type="ECO:0000269" key="22">
    <source>
    </source>
</evidence>
<evidence type="ECO:0000269" key="23">
    <source>
    </source>
</evidence>
<evidence type="ECO:0000269" key="24">
    <source>
    </source>
</evidence>
<evidence type="ECO:0000269" key="25">
    <source>
    </source>
</evidence>
<evidence type="ECO:0000303" key="26">
    <source>
    </source>
</evidence>
<evidence type="ECO:0000303" key="27">
    <source>
    </source>
</evidence>
<evidence type="ECO:0000303" key="28">
    <source>
    </source>
</evidence>
<evidence type="ECO:0000305" key="29"/>
<evidence type="ECO:0000305" key="30">
    <source>
    </source>
</evidence>
<evidence type="ECO:0000305" key="31">
    <source>
    </source>
</evidence>
<evidence type="ECO:0000305" key="32">
    <source>
    </source>
</evidence>
<evidence type="ECO:0000312" key="33">
    <source>
        <dbReference type="MGI" id="MGI:1928897"/>
    </source>
</evidence>
<evidence type="ECO:0007829" key="34">
    <source>
        <dbReference type="PDB" id="2XFM"/>
    </source>
</evidence>
<evidence type="ECO:0007829" key="35">
    <source>
        <dbReference type="PDB" id="4P1Z"/>
    </source>
</evidence>
<keyword id="KW-0002">3D-structure</keyword>
<keyword id="KW-0025">Alternative splicing</keyword>
<keyword id="KW-0963">Cytoplasm</keyword>
<keyword id="KW-0217">Developmental protein</keyword>
<keyword id="KW-0221">Differentiation</keyword>
<keyword id="KW-0255">Endonuclease</keyword>
<keyword id="KW-0378">Hydrolase</keyword>
<keyword id="KW-0460">Magnesium</keyword>
<keyword id="KW-0469">Meiosis</keyword>
<keyword id="KW-0479">Metal-binding</keyword>
<keyword id="KW-0488">Methylation</keyword>
<keyword id="KW-0540">Nuclease</keyword>
<keyword id="KW-1185">Reference proteome</keyword>
<keyword id="KW-0694">RNA-binding</keyword>
<keyword id="KW-0943">RNA-mediated gene silencing</keyword>
<keyword id="KW-0744">Spermatogenesis</keyword>
<keyword id="KW-0810">Translation regulation</keyword>
<keyword id="KW-0832">Ubl conjugation</keyword>
<name>PIWL1_MOUSE</name>
<dbReference type="EC" id="3.1.26.-" evidence="18"/>
<dbReference type="EMBL" id="AB032604">
    <property type="protein sequence ID" value="BAA93705.1"/>
    <property type="molecule type" value="mRNA"/>
</dbReference>
<dbReference type="EMBL" id="AF438405">
    <property type="protein sequence ID" value="AAL31014.1"/>
    <property type="molecule type" value="mRNA"/>
</dbReference>
<dbReference type="EMBL" id="EF196092">
    <property type="protein sequence ID" value="ABM69181.1"/>
    <property type="molecule type" value="mRNA"/>
</dbReference>
<dbReference type="EMBL" id="BC066846">
    <property type="protein sequence ID" value="AAH66846.1"/>
    <property type="status" value="ALT_SEQ"/>
    <property type="molecule type" value="mRNA"/>
</dbReference>
<dbReference type="EMBL" id="BC129857">
    <property type="protein sequence ID" value="AAI29858.1"/>
    <property type="molecule type" value="mRNA"/>
</dbReference>
<dbReference type="EMBL" id="BC129858">
    <property type="protein sequence ID" value="AAI29859.1"/>
    <property type="molecule type" value="mRNA"/>
</dbReference>
<dbReference type="CCDS" id="CCDS19690.1">
    <molecule id="Q9JMB7-1"/>
</dbReference>
<dbReference type="RefSeq" id="NP_067286.1">
    <molecule id="Q9JMB7-1"/>
    <property type="nucleotide sequence ID" value="NM_021311.3"/>
</dbReference>
<dbReference type="RefSeq" id="XP_006504381.1">
    <molecule id="Q9JMB7-1"/>
    <property type="nucleotide sequence ID" value="XM_006504318.2"/>
</dbReference>
<dbReference type="PDB" id="2XFM">
    <property type="method" value="NMR"/>
    <property type="chains" value="A=276-425"/>
</dbReference>
<dbReference type="PDB" id="4P1Z">
    <property type="method" value="X-ray"/>
    <property type="resolution" value="2.30 A"/>
    <property type="chains" value="A/B/C/D=485-612"/>
</dbReference>
<dbReference type="PDBsum" id="2XFM"/>
<dbReference type="PDBsum" id="4P1Z"/>
<dbReference type="BMRB" id="Q9JMB7"/>
<dbReference type="SMR" id="Q9JMB7"/>
<dbReference type="BioGRID" id="208311">
    <property type="interactions" value="2"/>
</dbReference>
<dbReference type="CORUM" id="Q9JMB7"/>
<dbReference type="DIP" id="DIP-59456N"/>
<dbReference type="FunCoup" id="Q9JMB7">
    <property type="interactions" value="634"/>
</dbReference>
<dbReference type="IntAct" id="Q9JMB7">
    <property type="interactions" value="5"/>
</dbReference>
<dbReference type="MINT" id="Q9JMB7"/>
<dbReference type="STRING" id="10090.ENSMUSP00000083222"/>
<dbReference type="GlyGen" id="Q9JMB7">
    <property type="glycosylation" value="1 site"/>
</dbReference>
<dbReference type="iPTMnet" id="Q9JMB7"/>
<dbReference type="PhosphoSitePlus" id="Q9JMB7"/>
<dbReference type="SwissPalm" id="Q9JMB7"/>
<dbReference type="PaxDb" id="10090-ENSMUSP00000083222"/>
<dbReference type="PeptideAtlas" id="Q9JMB7"/>
<dbReference type="ProteomicsDB" id="287738">
    <molecule id="Q9JMB7-1"/>
</dbReference>
<dbReference type="ProteomicsDB" id="287739">
    <molecule id="Q9JMB7-2"/>
</dbReference>
<dbReference type="Antibodypedia" id="31942">
    <property type="antibodies" value="282 antibodies from 37 providers"/>
</dbReference>
<dbReference type="DNASU" id="57749"/>
<dbReference type="Ensembl" id="ENSMUST00000086056.8">
    <molecule id="Q9JMB7-1"/>
    <property type="protein sequence ID" value="ENSMUSP00000083222.4"/>
    <property type="gene ID" value="ENSMUSG00000029423.11"/>
</dbReference>
<dbReference type="Ensembl" id="ENSMUST00000195959.2">
    <molecule id="Q9JMB7-2"/>
    <property type="protein sequence ID" value="ENSMUSP00000142386.2"/>
    <property type="gene ID" value="ENSMUSG00000029423.11"/>
</dbReference>
<dbReference type="GeneID" id="57749"/>
<dbReference type="KEGG" id="mmu:57749"/>
<dbReference type="UCSC" id="uc008zsi.1">
    <molecule id="Q9JMB7-1"/>
    <property type="organism name" value="mouse"/>
</dbReference>
<dbReference type="UCSC" id="uc008zsj.1">
    <molecule id="Q9JMB7-2"/>
    <property type="organism name" value="mouse"/>
</dbReference>
<dbReference type="AGR" id="MGI:1928897"/>
<dbReference type="CTD" id="9271"/>
<dbReference type="MGI" id="MGI:1928897">
    <property type="gene designation" value="Piwil1"/>
</dbReference>
<dbReference type="VEuPathDB" id="HostDB:ENSMUSG00000029423"/>
<dbReference type="eggNOG" id="KOG1042">
    <property type="taxonomic scope" value="Eukaryota"/>
</dbReference>
<dbReference type="GeneTree" id="ENSGT00950000183200"/>
<dbReference type="HOGENOM" id="CLU_008813_0_0_1"/>
<dbReference type="InParanoid" id="Q9JMB7"/>
<dbReference type="OMA" id="RRDFHDT"/>
<dbReference type="OrthoDB" id="445936at2759"/>
<dbReference type="PhylomeDB" id="Q9JMB7"/>
<dbReference type="TreeFam" id="TF354206"/>
<dbReference type="BioGRID-ORCS" id="57749">
    <property type="hits" value="4 hits in 79 CRISPR screens"/>
</dbReference>
<dbReference type="CD-CODE" id="DE1E139C">
    <property type="entry name" value="Chromatoid body"/>
</dbReference>
<dbReference type="ChiTaRS" id="Piwil1">
    <property type="organism name" value="mouse"/>
</dbReference>
<dbReference type="EvolutionaryTrace" id="Q9JMB7"/>
<dbReference type="PRO" id="PR:Q9JMB7"/>
<dbReference type="Proteomes" id="UP000000589">
    <property type="component" value="Chromosome 5"/>
</dbReference>
<dbReference type="RNAct" id="Q9JMB7">
    <property type="molecule type" value="protein"/>
</dbReference>
<dbReference type="Bgee" id="ENSMUSG00000029423">
    <property type="expression patterns" value="Expressed in spermatocyte and 16 other cell types or tissues"/>
</dbReference>
<dbReference type="ExpressionAtlas" id="Q9JMB7">
    <property type="expression patterns" value="baseline and differential"/>
</dbReference>
<dbReference type="GO" id="GO:0033391">
    <property type="term" value="C:chromatoid body"/>
    <property type="evidence" value="ECO:0000314"/>
    <property type="project" value="UniProtKB"/>
</dbReference>
<dbReference type="GO" id="GO:0005737">
    <property type="term" value="C:cytoplasm"/>
    <property type="evidence" value="ECO:0000314"/>
    <property type="project" value="UniProtKB"/>
</dbReference>
<dbReference type="GO" id="GO:0005829">
    <property type="term" value="C:cytosol"/>
    <property type="evidence" value="ECO:0000304"/>
    <property type="project" value="Reactome"/>
</dbReference>
<dbReference type="GO" id="GO:0097433">
    <property type="term" value="C:dense body"/>
    <property type="evidence" value="ECO:0000314"/>
    <property type="project" value="MGI"/>
</dbReference>
<dbReference type="GO" id="GO:0005634">
    <property type="term" value="C:nucleus"/>
    <property type="evidence" value="ECO:0000314"/>
    <property type="project" value="MGI"/>
</dbReference>
<dbReference type="GO" id="GO:0043186">
    <property type="term" value="C:P granule"/>
    <property type="evidence" value="ECO:0000250"/>
    <property type="project" value="UniProtKB"/>
</dbReference>
<dbReference type="GO" id="GO:0046872">
    <property type="term" value="F:metal ion binding"/>
    <property type="evidence" value="ECO:0007669"/>
    <property type="project" value="UniProtKB-KW"/>
</dbReference>
<dbReference type="GO" id="GO:0003729">
    <property type="term" value="F:mRNA binding"/>
    <property type="evidence" value="ECO:0000314"/>
    <property type="project" value="UniProtKB"/>
</dbReference>
<dbReference type="GO" id="GO:0140262">
    <property type="term" value="F:mRNA cap binding complex binding"/>
    <property type="evidence" value="ECO:0000314"/>
    <property type="project" value="UniProtKB"/>
</dbReference>
<dbReference type="GO" id="GO:0034584">
    <property type="term" value="F:piRNA binding"/>
    <property type="evidence" value="ECO:0000314"/>
    <property type="project" value="UniProtKB"/>
</dbReference>
<dbReference type="GO" id="GO:0019901">
    <property type="term" value="F:protein kinase binding"/>
    <property type="evidence" value="ECO:0000353"/>
    <property type="project" value="MGI"/>
</dbReference>
<dbReference type="GO" id="GO:0004521">
    <property type="term" value="F:RNA endonuclease activity"/>
    <property type="evidence" value="ECO:0000315"/>
    <property type="project" value="UniProtKB"/>
</dbReference>
<dbReference type="GO" id="GO:0003727">
    <property type="term" value="F:single-stranded RNA binding"/>
    <property type="evidence" value="ECO:0000314"/>
    <property type="project" value="MGI"/>
</dbReference>
<dbReference type="GO" id="GO:0051321">
    <property type="term" value="P:meiotic cell cycle"/>
    <property type="evidence" value="ECO:0007669"/>
    <property type="project" value="UniProtKB-KW"/>
</dbReference>
<dbReference type="GO" id="GO:0140991">
    <property type="term" value="P:piRNA-mediated gene silencing by mRNA destabilization"/>
    <property type="evidence" value="ECO:0000314"/>
    <property type="project" value="FlyBase"/>
</dbReference>
<dbReference type="GO" id="GO:0140990">
    <property type="term" value="P:primary piRNA processing"/>
    <property type="evidence" value="ECO:0000315"/>
    <property type="project" value="UniProtKB"/>
</dbReference>
<dbReference type="GO" id="GO:2000765">
    <property type="term" value="P:regulation of cytoplasmic translation"/>
    <property type="evidence" value="ECO:0000303"/>
    <property type="project" value="UniProtKB"/>
</dbReference>
<dbReference type="GO" id="GO:0031047">
    <property type="term" value="P:regulatory ncRNA-mediated gene silencing"/>
    <property type="evidence" value="ECO:0000250"/>
    <property type="project" value="UniProtKB"/>
</dbReference>
<dbReference type="GO" id="GO:0035092">
    <property type="term" value="P:sperm DNA condensation"/>
    <property type="evidence" value="ECO:0000315"/>
    <property type="project" value="UniProtKB"/>
</dbReference>
<dbReference type="GO" id="GO:0007286">
    <property type="term" value="P:spermatid development"/>
    <property type="evidence" value="ECO:0000315"/>
    <property type="project" value="UniProtKB"/>
</dbReference>
<dbReference type="GO" id="GO:0007283">
    <property type="term" value="P:spermatogenesis"/>
    <property type="evidence" value="ECO:0000314"/>
    <property type="project" value="UniProtKB"/>
</dbReference>
<dbReference type="GO" id="GO:0141006">
    <property type="term" value="P:transposable element silencing by piRNA-mediated heterochromatin formation"/>
    <property type="evidence" value="ECO:0000315"/>
    <property type="project" value="UniProtKB"/>
</dbReference>
<dbReference type="CDD" id="cd02845">
    <property type="entry name" value="PAZ_piwi_like"/>
    <property type="match status" value="1"/>
</dbReference>
<dbReference type="CDD" id="cd04658">
    <property type="entry name" value="Piwi_piwi-like_Euk"/>
    <property type="match status" value="1"/>
</dbReference>
<dbReference type="FunFam" id="3.30.420.10:FF:000014">
    <property type="entry name" value="Piwi-like RNA-mediated gene silencing 1"/>
    <property type="match status" value="1"/>
</dbReference>
<dbReference type="FunFam" id="3.40.50.2300:FF:000131">
    <property type="entry name" value="Piwi-like RNA-mediated gene silencing 1"/>
    <property type="match status" value="1"/>
</dbReference>
<dbReference type="FunFam" id="2.170.260.10:FF:000003">
    <property type="entry name" value="Piwi-like RNA-mediated gene silencing 2"/>
    <property type="match status" value="1"/>
</dbReference>
<dbReference type="Gene3D" id="3.40.50.2300">
    <property type="match status" value="1"/>
</dbReference>
<dbReference type="Gene3D" id="2.170.260.10">
    <property type="entry name" value="paz domain"/>
    <property type="match status" value="1"/>
</dbReference>
<dbReference type="Gene3D" id="3.30.420.10">
    <property type="entry name" value="Ribonuclease H-like superfamily/Ribonuclease H"/>
    <property type="match status" value="1"/>
</dbReference>
<dbReference type="InterPro" id="IPR014811">
    <property type="entry name" value="ArgoL1"/>
</dbReference>
<dbReference type="InterPro" id="IPR031320">
    <property type="entry name" value="GAGE"/>
</dbReference>
<dbReference type="InterPro" id="IPR003100">
    <property type="entry name" value="PAZ_dom"/>
</dbReference>
<dbReference type="InterPro" id="IPR036085">
    <property type="entry name" value="PAZ_dom_sf"/>
</dbReference>
<dbReference type="InterPro" id="IPR003165">
    <property type="entry name" value="Piwi"/>
</dbReference>
<dbReference type="InterPro" id="IPR012337">
    <property type="entry name" value="RNaseH-like_sf"/>
</dbReference>
<dbReference type="InterPro" id="IPR036397">
    <property type="entry name" value="RNaseH_sf"/>
</dbReference>
<dbReference type="PANTHER" id="PTHR22891">
    <property type="entry name" value="EUKARYOTIC TRANSLATION INITIATION FACTOR 2C"/>
    <property type="match status" value="1"/>
</dbReference>
<dbReference type="Pfam" id="PF08699">
    <property type="entry name" value="ArgoL1"/>
    <property type="match status" value="1"/>
</dbReference>
<dbReference type="Pfam" id="PF05831">
    <property type="entry name" value="GAGE"/>
    <property type="match status" value="1"/>
</dbReference>
<dbReference type="Pfam" id="PF02170">
    <property type="entry name" value="PAZ"/>
    <property type="match status" value="1"/>
</dbReference>
<dbReference type="Pfam" id="PF02171">
    <property type="entry name" value="Piwi"/>
    <property type="match status" value="1"/>
</dbReference>
<dbReference type="Pfam" id="PF23278">
    <property type="entry name" value="Piwi_N"/>
    <property type="match status" value="1"/>
</dbReference>
<dbReference type="SMART" id="SM01379">
    <property type="entry name" value="GAGE"/>
    <property type="match status" value="1"/>
</dbReference>
<dbReference type="SMART" id="SM00949">
    <property type="entry name" value="PAZ"/>
    <property type="match status" value="1"/>
</dbReference>
<dbReference type="SMART" id="SM00950">
    <property type="entry name" value="Piwi"/>
    <property type="match status" value="1"/>
</dbReference>
<dbReference type="SUPFAM" id="SSF101690">
    <property type="entry name" value="PAZ domain"/>
    <property type="match status" value="1"/>
</dbReference>
<dbReference type="SUPFAM" id="SSF53098">
    <property type="entry name" value="Ribonuclease H-like"/>
    <property type="match status" value="1"/>
</dbReference>
<dbReference type="PROSITE" id="PS50821">
    <property type="entry name" value="PAZ"/>
    <property type="match status" value="1"/>
</dbReference>
<dbReference type="PROSITE" id="PS50822">
    <property type="entry name" value="PIWI"/>
    <property type="match status" value="1"/>
</dbReference>
<feature type="chain" id="PRO_0000234568" description="Piwi-like protein 1">
    <location>
        <begin position="1"/>
        <end position="862"/>
    </location>
</feature>
<feature type="domain" description="PAZ" evidence="2">
    <location>
        <begin position="279"/>
        <end position="392"/>
    </location>
</feature>
<feature type="domain" description="Piwi" evidence="3">
    <location>
        <begin position="556"/>
        <end position="848"/>
    </location>
</feature>
<feature type="region of interest" description="Disordered" evidence="4">
    <location>
        <begin position="1"/>
        <end position="48"/>
    </location>
</feature>
<feature type="region of interest" description="Required for binding 2'-O-methylated 3'-end of piRNAs" evidence="17">
    <location>
        <begin position="317"/>
        <end position="319"/>
    </location>
</feature>
<feature type="region of interest" description="MID region" evidence="32">
    <location>
        <begin position="480"/>
        <end position="616"/>
    </location>
</feature>
<feature type="short sequence motif" description="D-box" evidence="20">
    <location>
        <begin position="218"/>
        <end position="225"/>
    </location>
</feature>
<feature type="compositionally biased region" description="Basic residues" evidence="4">
    <location>
        <begin position="1"/>
        <end position="13"/>
    </location>
</feature>
<feature type="active site" evidence="31">
    <location>
        <position position="633"/>
    </location>
</feature>
<feature type="active site" evidence="1">
    <location>
        <position position="671"/>
    </location>
</feature>
<feature type="active site" evidence="1">
    <location>
        <position position="703"/>
    </location>
</feature>
<feature type="active site" evidence="1">
    <location>
        <position position="837"/>
    </location>
</feature>
<feature type="site" description="Required for binding 2'-O-methylated 3'-end of piRNAs">
    <location>
        <position position="382"/>
    </location>
</feature>
<feature type="modified residue" description="Omega-N-methylarginine; by PRMT5; alternate" evidence="13">
    <location>
        <position position="14"/>
    </location>
</feature>
<feature type="modified residue" description="Symmetric dimethylarginine; by PRMT5; alternate" evidence="13">
    <location>
        <position position="14"/>
    </location>
</feature>
<feature type="modified residue" description="Omega-N-methylarginine; by PRMT5" evidence="13">
    <location>
        <position position="49"/>
    </location>
</feature>
<feature type="modified residue" description="Omega-N-methylarginine; alternate" evidence="14">
    <location>
        <position position="53"/>
    </location>
</feature>
<feature type="modified residue" description="Symmetric dimethylarginine; alternate" evidence="30">
    <location>
        <position position="53"/>
    </location>
</feature>
<feature type="modified residue" description="Omega-N-methylarginine; by PRMT5" evidence="13">
    <location>
        <position position="371"/>
    </location>
</feature>
<feature type="splice variant" id="VSP_036663" description="In isoform 2." evidence="27">
    <original>GVIRVPAPCQYAHKLAFLVGQSIHREPNLSLSNRLYYL</original>
    <variation>VSVLLWTTYPG</variation>
    <location>
        <begin position="825"/>
        <end position="862"/>
    </location>
</feature>
<feature type="mutagenesis site" description="Does not affect piRNA-binding but abolishes ubiquitination by the APC/C. Causes male sterility." evidence="20 25">
    <original>RRLL</original>
    <variation>ARLA</variation>
    <location>
        <begin position="218"/>
        <end position="221"/>
    </location>
</feature>
<feature type="mutagenesis site" description="Abolishes ubiquitination by the APC/C." evidence="20">
    <original>KSTFKK</original>
    <variation>ASTFAA</variation>
    <location>
        <begin position="330"/>
        <end position="335"/>
    </location>
</feature>
<feature type="mutagenesis site" description="Impairs binding to 2'-O-methylated 3'-end of piRNAs." evidence="17">
    <original>F</original>
    <variation>A</variation>
    <location>
        <position position="343"/>
    </location>
</feature>
<feature type="mutagenesis site" description="Abolishes piRNA-binding and ubiquitination by the APC/C." evidence="20">
    <original>YY</original>
    <variation>AA</variation>
    <location>
        <begin position="346"/>
        <end position="347"/>
    </location>
</feature>
<feature type="mutagenesis site" description="Impairs binding to 2'-O-methylated 3'-end of piRNAs." evidence="17">
    <original>M</original>
    <variation>A</variation>
    <location>
        <position position="382"/>
    </location>
</feature>
<feature type="mutagenesis site" description="In DAH mutant; causes male infertility due to derepression of LINE1 retrotransposons transcripts." evidence="18">
    <original>D</original>
    <variation>A</variation>
    <location>
        <position position="633"/>
    </location>
</feature>
<feature type="sequence conflict" description="In Ref. 4; AAH66846." evidence="29" ref="4">
    <original>G</original>
    <variation>S</variation>
    <location>
        <position position="374"/>
    </location>
</feature>
<feature type="sequence conflict" description="In Ref. 4; AAH66846." evidence="29" ref="4">
    <original>K</original>
    <variation>R</variation>
    <location>
        <position position="468"/>
    </location>
</feature>
<feature type="helix" evidence="34">
    <location>
        <begin position="280"/>
        <end position="290"/>
    </location>
</feature>
<feature type="helix" evidence="34">
    <location>
        <begin position="293"/>
        <end position="304"/>
    </location>
</feature>
<feature type="strand" evidence="34">
    <location>
        <begin position="308"/>
        <end position="311"/>
    </location>
</feature>
<feature type="turn" evidence="34">
    <location>
        <begin position="312"/>
        <end position="315"/>
    </location>
</feature>
<feature type="strand" evidence="34">
    <location>
        <begin position="316"/>
        <end position="319"/>
    </location>
</feature>
<feature type="strand" evidence="34">
    <location>
        <begin position="322"/>
        <end position="324"/>
    </location>
</feature>
<feature type="strand" evidence="34">
    <location>
        <begin position="335"/>
        <end position="338"/>
    </location>
</feature>
<feature type="helix" evidence="34">
    <location>
        <begin position="343"/>
        <end position="348"/>
    </location>
</feature>
<feature type="strand" evidence="34">
    <location>
        <begin position="358"/>
        <end position="360"/>
    </location>
</feature>
<feature type="strand" evidence="34">
    <location>
        <begin position="362"/>
        <end position="365"/>
    </location>
</feature>
<feature type="strand" evidence="34">
    <location>
        <begin position="381"/>
        <end position="383"/>
    </location>
</feature>
<feature type="helix" evidence="34">
    <location>
        <begin position="385"/>
        <end position="387"/>
    </location>
</feature>
<feature type="strand" evidence="34">
    <location>
        <begin position="388"/>
        <end position="390"/>
    </location>
</feature>
<feature type="strand" evidence="35">
    <location>
        <begin position="492"/>
        <end position="494"/>
    </location>
</feature>
<feature type="strand" evidence="35">
    <location>
        <begin position="498"/>
        <end position="502"/>
    </location>
</feature>
<feature type="helix" evidence="35">
    <location>
        <begin position="503"/>
        <end position="505"/>
    </location>
</feature>
<feature type="helix" evidence="35">
    <location>
        <begin position="506"/>
        <end position="519"/>
    </location>
</feature>
<feature type="helix" evidence="35">
    <location>
        <begin position="521"/>
        <end position="523"/>
    </location>
</feature>
<feature type="strand" evidence="35">
    <location>
        <begin position="525"/>
        <end position="527"/>
    </location>
</feature>
<feature type="strand" evidence="35">
    <location>
        <begin position="531"/>
        <end position="535"/>
    </location>
</feature>
<feature type="helix" evidence="35">
    <location>
        <begin position="539"/>
        <end position="549"/>
    </location>
</feature>
<feature type="strand" evidence="35">
    <location>
        <begin position="557"/>
        <end position="563"/>
    </location>
</feature>
<feature type="helix" evidence="35">
    <location>
        <begin position="566"/>
        <end position="579"/>
    </location>
</feature>
<feature type="strand" evidence="35">
    <location>
        <begin position="584"/>
        <end position="588"/>
    </location>
</feature>
<feature type="helix" evidence="35">
    <location>
        <begin position="589"/>
        <end position="592"/>
    </location>
</feature>
<feature type="helix" evidence="35">
    <location>
        <begin position="595"/>
        <end position="608"/>
    </location>
</feature>
<proteinExistence type="evidence at protein level"/>